<keyword id="KW-1003">Cell membrane</keyword>
<keyword id="KW-1015">Disulfide bond</keyword>
<keyword id="KW-0325">Glycoprotein</keyword>
<keyword id="KW-0336">GPI-anchor</keyword>
<keyword id="KW-0446">Lipid-binding</keyword>
<keyword id="KW-0449">Lipoprotein</keyword>
<keyword id="KW-0472">Membrane</keyword>
<keyword id="KW-1185">Reference proteome</keyword>
<keyword id="KW-0732">Signal</keyword>
<organism>
    <name type="scientific">Oryza sativa subsp. japonica</name>
    <name type="common">Rice</name>
    <dbReference type="NCBI Taxonomy" id="39947"/>
    <lineage>
        <taxon>Eukaryota</taxon>
        <taxon>Viridiplantae</taxon>
        <taxon>Streptophyta</taxon>
        <taxon>Embryophyta</taxon>
        <taxon>Tracheophyta</taxon>
        <taxon>Spermatophyta</taxon>
        <taxon>Magnoliopsida</taxon>
        <taxon>Liliopsida</taxon>
        <taxon>Poales</taxon>
        <taxon>Poaceae</taxon>
        <taxon>BOP clade</taxon>
        <taxon>Oryzoideae</taxon>
        <taxon>Oryzeae</taxon>
        <taxon>Oryzinae</taxon>
        <taxon>Oryza</taxon>
        <taxon>Oryza sativa</taxon>
    </lineage>
</organism>
<sequence length="228" mass="22642">MERSHLAVLLGLLAFAAGVPAAAAATAVEGAQAATAEASCEPSILATQVSLFCAPDMPTAQCCEPVVASVDLGGGVPCLCRVAAEPQLIISGLNATHLLTLYAACGGLRPGGARLAAACEGPAPPASIVTAPPPPVAFRRKPPAREAPPPPPAAEKLSPPPQQHDDSDHNKRVGPLPRGSPPPYAQSVPVGPAAAPPPPRSGASSSLQAPLAATTTIVAITLIAAAQY</sequence>
<proteinExistence type="evidence at protein level"/>
<protein>
    <recommendedName>
        <fullName evidence="8">Non-specific lipid-transfer protein EPAD1</fullName>
    </recommendedName>
    <alternativeName>
        <fullName evidence="7">Protein EXINE PATTERN DESIGNER 1</fullName>
    </alternativeName>
</protein>
<accession>Q75GY0</accession>
<accession>A0A0P0W141</accession>
<accession>Q10FL6</accession>
<dbReference type="EMBL" id="AC137991">
    <property type="protein sequence ID" value="AAS07321.1"/>
    <property type="molecule type" value="Genomic_DNA"/>
</dbReference>
<dbReference type="EMBL" id="DP000009">
    <property type="protein sequence ID" value="ABF98043.1"/>
    <property type="molecule type" value="Genomic_DNA"/>
</dbReference>
<dbReference type="EMBL" id="AP008209">
    <property type="protein sequence ID" value="BAF12750.1"/>
    <property type="molecule type" value="Genomic_DNA"/>
</dbReference>
<dbReference type="EMBL" id="AP014959">
    <property type="protein sequence ID" value="BAS85619.1"/>
    <property type="status" value="ALT_SEQ"/>
    <property type="molecule type" value="Genomic_DNA"/>
</dbReference>
<dbReference type="FunCoup" id="Q75GY0">
    <property type="interactions" value="764"/>
</dbReference>
<dbReference type="STRING" id="39947.A0A0P0W141"/>
<dbReference type="GlyCosmos" id="Q75GY0">
    <property type="glycosylation" value="1 site, No reported glycans"/>
</dbReference>
<dbReference type="PaxDb" id="39947-A0A0P0W141"/>
<dbReference type="EnsemblPlants" id="Os03t0663900-01">
    <property type="protein sequence ID" value="Os03t0663900-01"/>
    <property type="gene ID" value="Os03g0663900"/>
</dbReference>
<dbReference type="Gramene" id="Os03t0663900-01">
    <property type="protein sequence ID" value="Os03t0663900-01"/>
    <property type="gene ID" value="Os03g0663900"/>
</dbReference>
<dbReference type="KEGG" id="dosa:Os03g0663900"/>
<dbReference type="eggNOG" id="ENOG502R3EN">
    <property type="taxonomic scope" value="Eukaryota"/>
</dbReference>
<dbReference type="InParanoid" id="Q75GY0"/>
<dbReference type="OrthoDB" id="687619at2759"/>
<dbReference type="Proteomes" id="UP000000763">
    <property type="component" value="Chromosome 3"/>
</dbReference>
<dbReference type="Proteomes" id="UP000059680">
    <property type="component" value="Chromosome 3"/>
</dbReference>
<dbReference type="GO" id="GO:0005886">
    <property type="term" value="C:plasma membrane"/>
    <property type="evidence" value="ECO:0000314"/>
    <property type="project" value="UniProtKB"/>
</dbReference>
<dbReference type="GO" id="GO:0098552">
    <property type="term" value="C:side of membrane"/>
    <property type="evidence" value="ECO:0007669"/>
    <property type="project" value="UniProtKB-KW"/>
</dbReference>
<dbReference type="GO" id="GO:0005543">
    <property type="term" value="F:phospholipid binding"/>
    <property type="evidence" value="ECO:0000314"/>
    <property type="project" value="UniProtKB"/>
</dbReference>
<dbReference type="GO" id="GO:0010584">
    <property type="term" value="P:pollen exine formation"/>
    <property type="evidence" value="ECO:0000315"/>
    <property type="project" value="UniProtKB"/>
</dbReference>
<dbReference type="Gene3D" id="1.10.110.10">
    <property type="entry name" value="Plant lipid-transfer and hydrophobic proteins"/>
    <property type="match status" value="1"/>
</dbReference>
<dbReference type="InterPro" id="IPR036312">
    <property type="entry name" value="Bifun_inhib/LTP/seed_sf"/>
</dbReference>
<dbReference type="InterPro" id="IPR016140">
    <property type="entry name" value="Bifunc_inhib/LTP/seed_store"/>
</dbReference>
<dbReference type="Pfam" id="PF14368">
    <property type="entry name" value="LTP_2"/>
    <property type="match status" value="1"/>
</dbReference>
<dbReference type="SUPFAM" id="SSF47699">
    <property type="entry name" value="Bifunctional inhibitor/lipid-transfer protein/seed storage 2S albumin"/>
    <property type="match status" value="1"/>
</dbReference>
<evidence type="ECO:0000250" key="1">
    <source>
        <dbReference type="UniProtKB" id="Q0IQK9"/>
    </source>
</evidence>
<evidence type="ECO:0000255" key="2"/>
<evidence type="ECO:0000255" key="3">
    <source>
        <dbReference type="PROSITE-ProRule" id="PRU00498"/>
    </source>
</evidence>
<evidence type="ECO:0000256" key="4">
    <source>
        <dbReference type="SAM" id="MobiDB-lite"/>
    </source>
</evidence>
<evidence type="ECO:0000269" key="5">
    <source>
    </source>
</evidence>
<evidence type="ECO:0000269" key="6">
    <source>
    </source>
</evidence>
<evidence type="ECO:0000303" key="7">
    <source>
    </source>
</evidence>
<evidence type="ECO:0000305" key="8"/>
<evidence type="ECO:0000312" key="9">
    <source>
        <dbReference type="EMBL" id="AAS07321.1"/>
    </source>
</evidence>
<evidence type="ECO:0000312" key="10">
    <source>
        <dbReference type="EMBL" id="ABF98043.1"/>
    </source>
</evidence>
<evidence type="ECO:0000312" key="11">
    <source>
        <dbReference type="EMBL" id="BAS85619.1"/>
    </source>
</evidence>
<name>EPAD1_ORYSJ</name>
<feature type="signal peptide" evidence="2">
    <location>
        <begin position="1"/>
        <end position="24"/>
    </location>
</feature>
<feature type="chain" id="PRO_0000452251" description="Non-specific lipid-transfer protein EPAD1">
    <location>
        <begin position="25"/>
        <end position="228"/>
    </location>
</feature>
<feature type="region of interest" description="Disordered" evidence="4">
    <location>
        <begin position="124"/>
        <end position="207"/>
    </location>
</feature>
<feature type="compositionally biased region" description="Pro residues" evidence="4">
    <location>
        <begin position="145"/>
        <end position="162"/>
    </location>
</feature>
<feature type="glycosylation site" description="N-linked (GlcNAc...) asparagine" evidence="3">
    <location>
        <position position="94"/>
    </location>
</feature>
<feature type="disulfide bond" evidence="1">
    <location>
        <begin position="40"/>
        <end position="62"/>
    </location>
</feature>
<feature type="disulfide bond" evidence="1">
    <location>
        <begin position="63"/>
        <end position="105"/>
    </location>
</feature>
<feature type="disulfide bond" evidence="1">
    <location>
        <begin position="78"/>
        <end position="119"/>
    </location>
</feature>
<feature type="mutagenesis site" description="Prevents plama membrane localization; loss of function." evidence="6">
    <original>SSS</original>
    <variation>FFF</variation>
    <location>
        <begin position="204"/>
        <end position="206"/>
    </location>
</feature>
<comment type="function">
    <text evidence="6">Plant non-specific lipid-transfer protein that binds phospholipids in vitro (PubMed:33093144). Required for correct pollen exine patterning by controlling the continuity and homogeneity of the primexine distribution (PubMed:33093144).</text>
</comment>
<comment type="subcellular location">
    <subcellularLocation>
        <location evidence="6">Cell membrane</location>
        <topology evidence="6">Lipid-anchor</topology>
        <topology evidence="6">GPI-anchor</topology>
    </subcellularLocation>
    <text evidence="6">Localizes to the microspore plasma membrane.</text>
</comment>
<comment type="tissue specificity">
    <text evidence="5 6">Expressed in young panicles (PubMed:30675653). Specifically expressed in pollen mother cells and young microspores (PubMed:33093144).</text>
</comment>
<comment type="disruption phenotype">
    <text evidence="6">Abnormal exine pattern of pollen grains and complete male sterility.</text>
</comment>
<comment type="similarity">
    <text evidence="8">Belongs to the plant LTP family.</text>
</comment>
<comment type="sequence caution" evidence="8">
    <conflict type="erroneous gene model prediction">
        <sequence resource="EMBL-CDS" id="BAS85619"/>
    </conflict>
</comment>
<reference key="1">
    <citation type="journal article" date="2005" name="Genome Res.">
        <title>Sequence, annotation, and analysis of synteny between rice chromosome 3 and diverged grass species.</title>
        <authorList>
            <consortium name="The rice chromosome 3 sequencing consortium"/>
            <person name="Buell C.R."/>
            <person name="Yuan Q."/>
            <person name="Ouyang S."/>
            <person name="Liu J."/>
            <person name="Zhu W."/>
            <person name="Wang A."/>
            <person name="Maiti R."/>
            <person name="Haas B."/>
            <person name="Wortman J."/>
            <person name="Pertea M."/>
            <person name="Jones K.M."/>
            <person name="Kim M."/>
            <person name="Overton L."/>
            <person name="Tsitrin T."/>
            <person name="Fadrosh D."/>
            <person name="Bera J."/>
            <person name="Weaver B."/>
            <person name="Jin S."/>
            <person name="Johri S."/>
            <person name="Reardon M."/>
            <person name="Webb K."/>
            <person name="Hill J."/>
            <person name="Moffat K."/>
            <person name="Tallon L."/>
            <person name="Van Aken S."/>
            <person name="Lewis M."/>
            <person name="Utterback T."/>
            <person name="Feldblyum T."/>
            <person name="Zismann V."/>
            <person name="Iobst S."/>
            <person name="Hsiao J."/>
            <person name="de Vazeille A.R."/>
            <person name="Salzberg S.L."/>
            <person name="White O."/>
            <person name="Fraser C.M."/>
            <person name="Yu Y."/>
            <person name="Kim H."/>
            <person name="Rambo T."/>
            <person name="Currie J."/>
            <person name="Collura K."/>
            <person name="Kernodle-Thompson S."/>
            <person name="Wei F."/>
            <person name="Kudrna K."/>
            <person name="Ammiraju J.S.S."/>
            <person name="Luo M."/>
            <person name="Goicoechea J.L."/>
            <person name="Wing R.A."/>
            <person name="Henry D."/>
            <person name="Oates R."/>
            <person name="Palmer M."/>
            <person name="Pries G."/>
            <person name="Saski C."/>
            <person name="Simmons J."/>
            <person name="Soderlund C."/>
            <person name="Nelson W."/>
            <person name="de la Bastide M."/>
            <person name="Spiegel L."/>
            <person name="Nascimento L."/>
            <person name="Huang E."/>
            <person name="Preston R."/>
            <person name="Zutavern T."/>
            <person name="Palmer L."/>
            <person name="O'Shaughnessy A."/>
            <person name="Dike S."/>
            <person name="McCombie W.R."/>
            <person name="Minx P."/>
            <person name="Cordum H."/>
            <person name="Wilson R."/>
            <person name="Jin W."/>
            <person name="Lee H.R."/>
            <person name="Jiang J."/>
            <person name="Jackson S."/>
        </authorList>
    </citation>
    <scope>NUCLEOTIDE SEQUENCE [LARGE SCALE GENOMIC DNA]</scope>
    <source>
        <strain>cv. Nipponbare</strain>
    </source>
</reference>
<reference key="2">
    <citation type="journal article" date="2005" name="Nature">
        <title>The map-based sequence of the rice genome.</title>
        <authorList>
            <consortium name="International rice genome sequencing project (IRGSP)"/>
        </authorList>
    </citation>
    <scope>NUCLEOTIDE SEQUENCE [LARGE SCALE GENOMIC DNA]</scope>
    <source>
        <strain>cv. Nipponbare</strain>
    </source>
</reference>
<reference key="3">
    <citation type="journal article" date="2008" name="Nucleic Acids Res.">
        <title>The rice annotation project database (RAP-DB): 2008 update.</title>
        <authorList>
            <consortium name="The rice annotation project (RAP)"/>
        </authorList>
    </citation>
    <scope>GENOME REANNOTATION</scope>
    <source>
        <strain>cv. Nipponbare</strain>
    </source>
</reference>
<reference key="4">
    <citation type="journal article" date="2013" name="Rice">
        <title>Improvement of the Oryza sativa Nipponbare reference genome using next generation sequence and optical map data.</title>
        <authorList>
            <person name="Kawahara Y."/>
            <person name="de la Bastide M."/>
            <person name="Hamilton J.P."/>
            <person name="Kanamori H."/>
            <person name="McCombie W.R."/>
            <person name="Ouyang S."/>
            <person name="Schwartz D.C."/>
            <person name="Tanaka T."/>
            <person name="Wu J."/>
            <person name="Zhou S."/>
            <person name="Childs K.L."/>
            <person name="Davidson R.M."/>
            <person name="Lin H."/>
            <person name="Quesada-Ocampo L."/>
            <person name="Vaillancourt B."/>
            <person name="Sakai H."/>
            <person name="Lee S.S."/>
            <person name="Kim J."/>
            <person name="Numa H."/>
            <person name="Itoh T."/>
            <person name="Buell C.R."/>
            <person name="Matsumoto T."/>
        </authorList>
    </citation>
    <scope>GENOME REANNOTATION</scope>
    <source>
        <strain>cv. Nipponbare</strain>
    </source>
</reference>
<reference key="5">
    <citation type="journal article" date="2019" name="Protoplasma">
        <title>Gene expression and localization of arabinogalactan proteins during the development of anther, ovule, and embryo in rice.</title>
        <authorList>
            <person name="Ma T."/>
            <person name="Dong F."/>
            <person name="Luan D."/>
            <person name="Hu H."/>
            <person name="Zhao J."/>
        </authorList>
    </citation>
    <scope>TISSUE SPECIFICITY</scope>
</reference>
<reference key="6">
    <citation type="journal article" date="2020" name="Plant Cell">
        <title>Grass-specific EPAD1 is essential for pollen exine patterning in rice.</title>
        <authorList>
            <person name="Li H."/>
            <person name="Kim Y.J."/>
            <person name="Yang L."/>
            <person name="Liu Z."/>
            <person name="Zhang J."/>
            <person name="Shi H."/>
            <person name="Huang G."/>
            <person name="Persson S."/>
            <person name="Zhang D."/>
            <person name="Liang W."/>
        </authorList>
    </citation>
    <scope>FUNCTION</scope>
    <scope>SUBCELLULAR LOCATION</scope>
    <scope>TISSUE SPECIFICITY</scope>
    <scope>DISRUPTION PHENOTYPE</scope>
    <scope>MUTAGENESIS OF 204-SER--SER-206</scope>
</reference>
<gene>
    <name evidence="7" type="primary">EPAD1</name>
    <name evidence="11" type="ordered locus">Os03g0663900</name>
    <name evidence="10" type="ordered locus">LOC_Os03g46110</name>
    <name evidence="9" type="ORF">OSJNBa0034D21.11</name>
</gene>